<protein>
    <recommendedName>
        <fullName>Lysylphosphatidylglycerol biosynthesis bifunctional protein LysX</fullName>
    </recommendedName>
    <domain>
        <recommendedName>
            <fullName>Lysine--tRNA ligase</fullName>
            <ecNumber>6.1.1.6</ecNumber>
        </recommendedName>
        <alternativeName>
            <fullName>Lysyl-tRNA synthetase</fullName>
            <shortName>LysRS</shortName>
        </alternativeName>
    </domain>
    <domain>
        <recommendedName>
            <fullName>Phosphatidylglycerol lysyltransferase</fullName>
            <ecNumber>2.3.2.3</ecNumber>
        </recommendedName>
        <alternativeName>
            <fullName>Lysylphosphatidylglycerol synthetase</fullName>
            <shortName>LPG synthetase</shortName>
        </alternativeName>
    </domain>
</protein>
<evidence type="ECO:0000250" key="1"/>
<evidence type="ECO:0000255" key="2"/>
<evidence type="ECO:0000305" key="3"/>
<gene>
    <name type="primary">lysX</name>
    <name type="ordered locus">MMAR_2447</name>
</gene>
<name>LYSX_MYCMM</name>
<proteinExistence type="inferred from homology"/>
<dbReference type="EC" id="6.1.1.6"/>
<dbReference type="EC" id="2.3.2.3"/>
<dbReference type="EMBL" id="CP000854">
    <property type="protein sequence ID" value="ACC40897.1"/>
    <property type="status" value="ALT_INIT"/>
    <property type="molecule type" value="Genomic_DNA"/>
</dbReference>
<dbReference type="RefSeq" id="WP_020725092.1">
    <property type="nucleotide sequence ID" value="NC_010612.1"/>
</dbReference>
<dbReference type="SMR" id="B2HR11"/>
<dbReference type="STRING" id="216594.MMAR_2447"/>
<dbReference type="KEGG" id="mmi:MMAR_2447"/>
<dbReference type="eggNOG" id="COG1190">
    <property type="taxonomic scope" value="Bacteria"/>
</dbReference>
<dbReference type="eggNOG" id="COG2898">
    <property type="taxonomic scope" value="Bacteria"/>
</dbReference>
<dbReference type="HOGENOM" id="CLU_008255_2_0_11"/>
<dbReference type="OrthoDB" id="9801152at2"/>
<dbReference type="Proteomes" id="UP000001190">
    <property type="component" value="Chromosome"/>
</dbReference>
<dbReference type="GO" id="GO:0005829">
    <property type="term" value="C:cytosol"/>
    <property type="evidence" value="ECO:0007669"/>
    <property type="project" value="TreeGrafter"/>
</dbReference>
<dbReference type="GO" id="GO:0005886">
    <property type="term" value="C:plasma membrane"/>
    <property type="evidence" value="ECO:0007669"/>
    <property type="project" value="UniProtKB-SubCell"/>
</dbReference>
<dbReference type="GO" id="GO:0005524">
    <property type="term" value="F:ATP binding"/>
    <property type="evidence" value="ECO:0007669"/>
    <property type="project" value="UniProtKB-UniRule"/>
</dbReference>
<dbReference type="GO" id="GO:0004824">
    <property type="term" value="F:lysine-tRNA ligase activity"/>
    <property type="evidence" value="ECO:0007669"/>
    <property type="project" value="UniProtKB-UniRule"/>
</dbReference>
<dbReference type="GO" id="GO:0000287">
    <property type="term" value="F:magnesium ion binding"/>
    <property type="evidence" value="ECO:0007669"/>
    <property type="project" value="UniProtKB-UniRule"/>
</dbReference>
<dbReference type="GO" id="GO:0050071">
    <property type="term" value="F:phosphatidylglycerol lysyltransferase activity"/>
    <property type="evidence" value="ECO:0007669"/>
    <property type="project" value="UniProtKB-EC"/>
</dbReference>
<dbReference type="GO" id="GO:0000049">
    <property type="term" value="F:tRNA binding"/>
    <property type="evidence" value="ECO:0007669"/>
    <property type="project" value="TreeGrafter"/>
</dbReference>
<dbReference type="GO" id="GO:0006629">
    <property type="term" value="P:lipid metabolic process"/>
    <property type="evidence" value="ECO:0007669"/>
    <property type="project" value="UniProtKB-KW"/>
</dbReference>
<dbReference type="GO" id="GO:0006430">
    <property type="term" value="P:lysyl-tRNA aminoacylation"/>
    <property type="evidence" value="ECO:0007669"/>
    <property type="project" value="UniProtKB-UniRule"/>
</dbReference>
<dbReference type="GO" id="GO:0046677">
    <property type="term" value="P:response to antibiotic"/>
    <property type="evidence" value="ECO:0007669"/>
    <property type="project" value="UniProtKB-KW"/>
</dbReference>
<dbReference type="CDD" id="cd04322">
    <property type="entry name" value="LysRS_N"/>
    <property type="match status" value="1"/>
</dbReference>
<dbReference type="Gene3D" id="3.30.930.10">
    <property type="entry name" value="Bira Bifunctional Protein, Domain 2"/>
    <property type="match status" value="1"/>
</dbReference>
<dbReference type="Gene3D" id="2.40.50.140">
    <property type="entry name" value="Nucleic acid-binding proteins"/>
    <property type="match status" value="1"/>
</dbReference>
<dbReference type="HAMAP" id="MF_00252">
    <property type="entry name" value="Lys_tRNA_synth_class2"/>
    <property type="match status" value="1"/>
</dbReference>
<dbReference type="InterPro" id="IPR004364">
    <property type="entry name" value="Aa-tRNA-synt_II"/>
</dbReference>
<dbReference type="InterPro" id="IPR006195">
    <property type="entry name" value="aa-tRNA-synth_II"/>
</dbReference>
<dbReference type="InterPro" id="IPR045864">
    <property type="entry name" value="aa-tRNA-synth_II/BPL/LPL"/>
</dbReference>
<dbReference type="InterPro" id="IPR024320">
    <property type="entry name" value="LPG_synthase_C"/>
</dbReference>
<dbReference type="InterPro" id="IPR002313">
    <property type="entry name" value="Lys-tRNA-ligase_II"/>
</dbReference>
<dbReference type="InterPro" id="IPR044136">
    <property type="entry name" value="Lys-tRNA-ligase_II_N"/>
</dbReference>
<dbReference type="InterPro" id="IPR018149">
    <property type="entry name" value="Lys-tRNA-synth_II_C"/>
</dbReference>
<dbReference type="InterPro" id="IPR012340">
    <property type="entry name" value="NA-bd_OB-fold"/>
</dbReference>
<dbReference type="InterPro" id="IPR004365">
    <property type="entry name" value="NA-bd_OB_tRNA"/>
</dbReference>
<dbReference type="InterPro" id="IPR031553">
    <property type="entry name" value="tRNA-synt_2_TM"/>
</dbReference>
<dbReference type="NCBIfam" id="TIGR00499">
    <property type="entry name" value="lysS_bact"/>
    <property type="match status" value="1"/>
</dbReference>
<dbReference type="NCBIfam" id="NF001756">
    <property type="entry name" value="PRK00484.1"/>
    <property type="match status" value="1"/>
</dbReference>
<dbReference type="NCBIfam" id="NF002821">
    <property type="entry name" value="PRK02983.1"/>
    <property type="match status" value="1"/>
</dbReference>
<dbReference type="PANTHER" id="PTHR42918:SF15">
    <property type="entry name" value="LYSINE--TRNA LIGASE, CHLOROPLASTIC_MITOCHONDRIAL"/>
    <property type="match status" value="1"/>
</dbReference>
<dbReference type="PANTHER" id="PTHR42918">
    <property type="entry name" value="LYSYL-TRNA SYNTHETASE"/>
    <property type="match status" value="1"/>
</dbReference>
<dbReference type="Pfam" id="PF09924">
    <property type="entry name" value="LPG_synthase_C"/>
    <property type="match status" value="1"/>
</dbReference>
<dbReference type="Pfam" id="PF00152">
    <property type="entry name" value="tRNA-synt_2"/>
    <property type="match status" value="1"/>
</dbReference>
<dbReference type="Pfam" id="PF16995">
    <property type="entry name" value="tRNA-synt_2_TM"/>
    <property type="match status" value="1"/>
</dbReference>
<dbReference type="Pfam" id="PF01336">
    <property type="entry name" value="tRNA_anti-codon"/>
    <property type="match status" value="1"/>
</dbReference>
<dbReference type="PRINTS" id="PR00982">
    <property type="entry name" value="TRNASYNTHLYS"/>
</dbReference>
<dbReference type="SUPFAM" id="SSF55681">
    <property type="entry name" value="Class II aaRS and biotin synthetases"/>
    <property type="match status" value="1"/>
</dbReference>
<dbReference type="SUPFAM" id="SSF50249">
    <property type="entry name" value="Nucleic acid-binding proteins"/>
    <property type="match status" value="1"/>
</dbReference>
<dbReference type="PROSITE" id="PS50862">
    <property type="entry name" value="AA_TRNA_LIGASE_II"/>
    <property type="match status" value="1"/>
</dbReference>
<feature type="chain" id="PRO_0000394322" description="Lysylphosphatidylglycerol biosynthesis bifunctional protein LysX">
    <location>
        <begin position="1"/>
        <end position="1105"/>
    </location>
</feature>
<feature type="transmembrane region" description="Helical" evidence="2">
    <location>
        <begin position="20"/>
        <end position="40"/>
    </location>
</feature>
<feature type="transmembrane region" description="Helical" evidence="2">
    <location>
        <begin position="62"/>
        <end position="82"/>
    </location>
</feature>
<feature type="transmembrane region" description="Helical" evidence="2">
    <location>
        <begin position="86"/>
        <end position="106"/>
    </location>
</feature>
<feature type="transmembrane region" description="Helical" evidence="2">
    <location>
        <begin position="117"/>
        <end position="137"/>
    </location>
</feature>
<feature type="transmembrane region" description="Helical" evidence="2">
    <location>
        <begin position="154"/>
        <end position="174"/>
    </location>
</feature>
<feature type="transmembrane region" description="Helical" evidence="2">
    <location>
        <begin position="186"/>
        <end position="203"/>
    </location>
</feature>
<feature type="transmembrane region" description="Helical" evidence="2">
    <location>
        <begin position="208"/>
        <end position="228"/>
    </location>
</feature>
<feature type="region of interest" description="Phosphatidylglycerol lysyltransferase">
    <location>
        <begin position="1"/>
        <end position="603"/>
    </location>
</feature>
<feature type="region of interest" description="Lysine--tRNA ligase">
    <location>
        <begin position="604"/>
        <end position="1105"/>
    </location>
</feature>
<feature type="binding site" evidence="1">
    <location>
        <position position="1017"/>
    </location>
    <ligand>
        <name>Mg(2+)</name>
        <dbReference type="ChEBI" id="CHEBI:18420"/>
        <label>1</label>
    </ligand>
</feature>
<feature type="binding site" evidence="1">
    <location>
        <position position="1024"/>
    </location>
    <ligand>
        <name>Mg(2+)</name>
        <dbReference type="ChEBI" id="CHEBI:18420"/>
        <label>1</label>
    </ligand>
</feature>
<feature type="binding site" evidence="1">
    <location>
        <position position="1024"/>
    </location>
    <ligand>
        <name>Mg(2+)</name>
        <dbReference type="ChEBI" id="CHEBI:18420"/>
        <label>2</label>
    </ligand>
</feature>
<accession>B2HR11</accession>
<keyword id="KW-0030">Aminoacyl-tRNA synthetase</keyword>
<keyword id="KW-0046">Antibiotic resistance</keyword>
<keyword id="KW-0067">ATP-binding</keyword>
<keyword id="KW-1003">Cell membrane</keyword>
<keyword id="KW-0436">Ligase</keyword>
<keyword id="KW-0443">Lipid metabolism</keyword>
<keyword id="KW-0460">Magnesium</keyword>
<keyword id="KW-0472">Membrane</keyword>
<keyword id="KW-0479">Metal-binding</keyword>
<keyword id="KW-0511">Multifunctional enzyme</keyword>
<keyword id="KW-0547">Nucleotide-binding</keyword>
<keyword id="KW-1185">Reference proteome</keyword>
<keyword id="KW-0808">Transferase</keyword>
<keyword id="KW-0812">Transmembrane</keyword>
<keyword id="KW-1133">Transmembrane helix</keyword>
<keyword id="KW-0843">Virulence</keyword>
<organism>
    <name type="scientific">Mycobacterium marinum (strain ATCC BAA-535 / M)</name>
    <dbReference type="NCBI Taxonomy" id="216594"/>
    <lineage>
        <taxon>Bacteria</taxon>
        <taxon>Bacillati</taxon>
        <taxon>Actinomycetota</taxon>
        <taxon>Actinomycetes</taxon>
        <taxon>Mycobacteriales</taxon>
        <taxon>Mycobacteriaceae</taxon>
        <taxon>Mycobacterium</taxon>
        <taxon>Mycobacterium ulcerans group</taxon>
    </lineage>
</organism>
<sequence length="1105" mass="121087">MTVTKPRSVQGRHISRYDWVPAAAGWAVGVIATLSLLASISPLVRWIIKVPREFINSYLFNFPDTSFAWSFVLALLAAALAARKRIAWLLLLTNVVLAAFLNAADIAAGGNTAAQNFGENLGFAVHVVAIVVLVLGYRQFWAKVRRGALFKAAAVLVAGGAIGILVSWGLVELFPGSLAPHDRLPYVANRVIGFALADPDLFTGRPHVFLNAMFGLFGALALIAATIVLFQSQRADNALTGEDESAIRGLLELYGNSDSLGYFATRRDKSVIFASSGRAAITYRVEIGVCLASGDPVGDPRSWPQAIDAWLRLCQTYGWSPGVMGASSQGAKAYREAGLNALELGDEAILVPADFTLSGPDMRGVRQAVTRARRAGLTVRIRRHRDISDAEMEQTIDRADGWRDTESERGFSMALGRLGDPADTDCLLVEALDPDDLVVAMLSLVPWGTSGVSLDLMRRSPQSPNGTIELMVSELALRAEGLGISRISLNFAMFRSAFEQGAQLGAGPVARLWRWLLVFFSRWWQIETLYRSNQKYQPQWVPRYACYEDARVIPKVGVASVIAEGFLVLPFSRRNKVHTGHHPAVPERLAATGLLHHDGSAPDVSGLRQSAIADGDDPQRRLPEQVRVRLNKLKKLRSSGIDAYPVGEPPTHTVAQAMDADDQASVSVSGRILRVRNYGGVLFAHLRDWSGEIQVLLDNSRLEQGRAADFNAAIDLGDLVEMTGQMGSSKTGTRSLIVRRWRLIGKCLRPLPNKWKGLTDPEARVRTRYVDLAVNAESRALITARSAVLRSVRETLSAKGFIEVETPILQQVHGGATARPFITHINTYSMDLFLRIAPELYLKRLCVGGVERVFELGRAFRNEGVDFSHNPEFTLLEAYQAHADYRVWIDSCRELIQNAAQAANGAPVAMRPAGGGRLEPVDISGVWAVKTVHDAVSEALGEQIDADTDLATLRRLADAARIPYRAQWDAGAVVLELYEHLVESRTEQPTFYLDFPTSVSPLTRPHRSKPGIAERWDLVAWGVELGTAYSELTDPVEQRLRLEEQSLLAAGGDPEAMQLDEDFLQAMEYAMPPTGGLGMGVDRVVMLITGRSIRETLPFPLAKPH</sequence>
<reference key="1">
    <citation type="journal article" date="2008" name="Genome Res.">
        <title>Insights from the complete genome sequence of Mycobacterium marinum on the evolution of Mycobacterium tuberculosis.</title>
        <authorList>
            <person name="Stinear T.P."/>
            <person name="Seemann T."/>
            <person name="Harrison P.F."/>
            <person name="Jenkin G.A."/>
            <person name="Davies J.K."/>
            <person name="Johnson P.D."/>
            <person name="Abdellah Z."/>
            <person name="Arrowsmith C."/>
            <person name="Chillingworth T."/>
            <person name="Churcher C."/>
            <person name="Clarke K."/>
            <person name="Cronin A."/>
            <person name="Davis P."/>
            <person name="Goodhead I."/>
            <person name="Holroyd N."/>
            <person name="Jagels K."/>
            <person name="Lord A."/>
            <person name="Moule S."/>
            <person name="Mungall K."/>
            <person name="Norbertczak H."/>
            <person name="Quail M.A."/>
            <person name="Rabbinowitsch E."/>
            <person name="Walker D."/>
            <person name="White B."/>
            <person name="Whitehead S."/>
            <person name="Small P.L."/>
            <person name="Brosch R."/>
            <person name="Ramakrishnan L."/>
            <person name="Fischbach M.A."/>
            <person name="Parkhill J."/>
            <person name="Cole S.T."/>
        </authorList>
    </citation>
    <scope>NUCLEOTIDE SEQUENCE [LARGE SCALE GENOMIC DNA]</scope>
    <source>
        <strain>ATCC BAA-535 / M</strain>
    </source>
</reference>
<comment type="function">
    <text evidence="1">Catalyzes the production of L-lysyl-tRNA(Lys)transfer and the transfer of a lysyl group from L-lysyl-tRNA(Lys) to membrane-bound phosphatidylglycerol (PG), which produces lysylphosphatidylglycerol (LPG), one of the components of the bacterial membrane with a positive net charge. LPG synthesis contributes to the resistance to cationic antimicrobial peptides (CAMPs) and likely protects M.tuberculosis against the CAMPs produced by competiting microorganisms (bacteriocins). In fact, the modification of anionic phosphatidylglycerol with positively charged L-lysine results in repulsion of the peptides (By similarity).</text>
</comment>
<comment type="catalytic activity">
    <reaction>
        <text>tRNA(Lys) + L-lysine + ATP = L-lysyl-tRNA(Lys) + AMP + diphosphate</text>
        <dbReference type="Rhea" id="RHEA:20792"/>
        <dbReference type="Rhea" id="RHEA-COMP:9696"/>
        <dbReference type="Rhea" id="RHEA-COMP:9697"/>
        <dbReference type="ChEBI" id="CHEBI:30616"/>
        <dbReference type="ChEBI" id="CHEBI:32551"/>
        <dbReference type="ChEBI" id="CHEBI:33019"/>
        <dbReference type="ChEBI" id="CHEBI:78442"/>
        <dbReference type="ChEBI" id="CHEBI:78529"/>
        <dbReference type="ChEBI" id="CHEBI:456215"/>
        <dbReference type="EC" id="6.1.1.6"/>
    </reaction>
</comment>
<comment type="catalytic activity">
    <reaction>
        <text>L-lysyl-tRNA(Lys) + a 1,2-diacyl-sn-glycero-3-phospho-(1'-sn-glycerol) = a 1,2-diacyl-sn-glycero-3-phospho-1'-(3'-O-L-lysyl)-sn-glycerol + tRNA(Lys)</text>
        <dbReference type="Rhea" id="RHEA:10668"/>
        <dbReference type="Rhea" id="RHEA-COMP:9696"/>
        <dbReference type="Rhea" id="RHEA-COMP:9697"/>
        <dbReference type="ChEBI" id="CHEBI:64716"/>
        <dbReference type="ChEBI" id="CHEBI:75792"/>
        <dbReference type="ChEBI" id="CHEBI:78442"/>
        <dbReference type="ChEBI" id="CHEBI:78529"/>
        <dbReference type="EC" id="2.3.2.3"/>
    </reaction>
</comment>
<comment type="cofactor">
    <cofactor evidence="1">
        <name>Mg(2+)</name>
        <dbReference type="ChEBI" id="CHEBI:18420"/>
    </cofactor>
    <text evidence="1">Binds 3 Mg(2+) ions per subunit.</text>
</comment>
<comment type="subcellular location">
    <subcellularLocation>
        <location evidence="3">Cell membrane</location>
        <topology evidence="3">Multi-pass membrane protein</topology>
    </subcellularLocation>
</comment>
<comment type="similarity">
    <text evidence="3">In the N-terminal section; belongs to the LPG synthetase family.</text>
</comment>
<comment type="similarity">
    <text evidence="3">In the C-terminal section; belongs to the class-II aminoacyl-tRNA synthetase family.</text>
</comment>
<comment type="sequence caution" evidence="3">
    <conflict type="erroneous initiation">
        <sequence resource="EMBL-CDS" id="ACC40897"/>
    </conflict>
    <text>Truncated N-terminus.</text>
</comment>